<organismHost>
    <name type="scientific">Oryctolagus cuniculus</name>
    <name type="common">Rabbit</name>
    <dbReference type="NCBI Taxonomy" id="9986"/>
</organismHost>
<keyword id="KW-1015">Disulfide bond</keyword>
<keyword id="KW-0249">Electron transport</keyword>
<keyword id="KW-1035">Host cytoplasm</keyword>
<keyword id="KW-0676">Redox-active center</keyword>
<keyword id="KW-0813">Transport</keyword>
<dbReference type="EMBL" id="AY484669">
    <property type="protein sequence ID" value="AAS49783.1"/>
    <property type="molecule type" value="Genomic_DNA"/>
</dbReference>
<dbReference type="SMR" id="Q6RZM1"/>
<dbReference type="Proteomes" id="UP000166173">
    <property type="component" value="Segment"/>
</dbReference>
<dbReference type="GO" id="GO:0030430">
    <property type="term" value="C:host cell cytoplasm"/>
    <property type="evidence" value="ECO:0007669"/>
    <property type="project" value="UniProtKB-SubCell"/>
</dbReference>
<dbReference type="Gene3D" id="3.40.30.10">
    <property type="entry name" value="Glutaredoxin"/>
    <property type="match status" value="1"/>
</dbReference>
<dbReference type="InterPro" id="IPR008554">
    <property type="entry name" value="Glutaredoxin-like"/>
</dbReference>
<dbReference type="InterPro" id="IPR036249">
    <property type="entry name" value="Thioredoxin-like_sf"/>
</dbReference>
<dbReference type="Pfam" id="PF05768">
    <property type="entry name" value="Glrx-like"/>
    <property type="match status" value="1"/>
</dbReference>
<dbReference type="SUPFAM" id="SSF52833">
    <property type="entry name" value="Thioredoxin-like"/>
    <property type="match status" value="1"/>
</dbReference>
<evidence type="ECO:0000250" key="1">
    <source>
        <dbReference type="UniProtKB" id="P68460"/>
    </source>
</evidence>
<evidence type="ECO:0000305" key="2"/>
<proteinExistence type="inferred from homology"/>
<feature type="chain" id="PRO_0000141636" description="Glutaredoxin-2">
    <location>
        <begin position="1"/>
        <end position="124"/>
    </location>
</feature>
<feature type="disulfide bond" description="Redox-active" evidence="1">
    <location>
        <begin position="13"/>
        <end position="16"/>
    </location>
</feature>
<gene>
    <name type="primary">OPG088</name>
    <name type="ordered locus">RPXV070</name>
</gene>
<reference key="1">
    <citation type="journal article" date="2005" name="J. Gen. Virol.">
        <title>Complete coding sequences of the rabbitpox virus genome.</title>
        <authorList>
            <person name="Li G."/>
            <person name="Chen N."/>
            <person name="Roper R.L."/>
            <person name="Feng Z."/>
            <person name="Hunter A.L."/>
            <person name="Danila M."/>
            <person name="Lefkowitz E.J."/>
            <person name="Buller R.M.L."/>
            <person name="Upton C."/>
        </authorList>
    </citation>
    <scope>NUCLEOTIDE SEQUENCE [LARGE SCALE GENOMIC DNA]</scope>
</reference>
<name>GLRX2_RABPU</name>
<comment type="function">
    <text evidence="1">Glutaredoxin necessary for virion morphogenesis and virus replication. Functions as a thiol-disulfide transfer protein between membrane-associated OPG128 and substrates OPG095 or OPG053. The complete pathway for formation of disulfide bonds in intracellular virion membrane proteins sequentially involves oxidation of OPG072, OPG128 and OPG088. Exhibit thioltransferase and dehydroascorbate reductase activities in vitro.</text>
</comment>
<comment type="subunit">
    <text evidence="1">Homodimer.</text>
</comment>
<comment type="subcellular location">
    <subcellularLocation>
        <location evidence="1">Host cytoplasm</location>
    </subcellularLocation>
</comment>
<comment type="induction">
    <text evidence="1">Expressed in the intermediate phase of the viral replicative cycle.</text>
</comment>
<comment type="similarity">
    <text evidence="2">Belongs to the glutaredoxin family.</text>
</comment>
<protein>
    <recommendedName>
        <fullName>Glutaredoxin-2</fullName>
    </recommendedName>
</protein>
<organism>
    <name type="scientific">Rabbitpox virus (strain Utrecht)</name>
    <name type="common">RPV</name>
    <dbReference type="NCBI Taxonomy" id="45417"/>
    <lineage>
        <taxon>Viruses</taxon>
        <taxon>Varidnaviria</taxon>
        <taxon>Bamfordvirae</taxon>
        <taxon>Nucleocytoviricota</taxon>
        <taxon>Pokkesviricetes</taxon>
        <taxon>Chitovirales</taxon>
        <taxon>Poxviridae</taxon>
        <taxon>Chordopoxvirinae</taxon>
        <taxon>Orthopoxvirus</taxon>
        <taxon>Vaccinia virus</taxon>
    </lineage>
</organism>
<sequence>MKNVLIIFGKPYCSICENVSDAVEELKSEYDILHVDILSFFLKDGDSSMLGDVKRGTLIGNFAAHLSNYIVSIFKYNPQTKQMAFVDINKSLDFTKTDKSLVNLEILKSEIEKATYGVWPPVTE</sequence>
<accession>Q6RZM1</accession>